<accession>Q46JG5</accession>
<keyword id="KW-0067">ATP-binding</keyword>
<keyword id="KW-0133">Cell shape</keyword>
<keyword id="KW-0961">Cell wall biogenesis/degradation</keyword>
<keyword id="KW-0963">Cytoplasm</keyword>
<keyword id="KW-0436">Ligase</keyword>
<keyword id="KW-0460">Magnesium</keyword>
<keyword id="KW-0464">Manganese</keyword>
<keyword id="KW-0479">Metal-binding</keyword>
<keyword id="KW-0547">Nucleotide-binding</keyword>
<keyword id="KW-0573">Peptidoglycan synthesis</keyword>
<keyword id="KW-1185">Reference proteome</keyword>
<organism>
    <name type="scientific">Prochlorococcus marinus (strain NATL2A)</name>
    <dbReference type="NCBI Taxonomy" id="59920"/>
    <lineage>
        <taxon>Bacteria</taxon>
        <taxon>Bacillati</taxon>
        <taxon>Cyanobacteriota</taxon>
        <taxon>Cyanophyceae</taxon>
        <taxon>Synechococcales</taxon>
        <taxon>Prochlorococcaceae</taxon>
        <taxon>Prochlorococcus</taxon>
    </lineage>
</organism>
<comment type="function">
    <text evidence="2">Cell wall formation.</text>
</comment>
<comment type="catalytic activity">
    <reaction evidence="2">
        <text>2 D-alanine + ATP = D-alanyl-D-alanine + ADP + phosphate + H(+)</text>
        <dbReference type="Rhea" id="RHEA:11224"/>
        <dbReference type="ChEBI" id="CHEBI:15378"/>
        <dbReference type="ChEBI" id="CHEBI:30616"/>
        <dbReference type="ChEBI" id="CHEBI:43474"/>
        <dbReference type="ChEBI" id="CHEBI:57416"/>
        <dbReference type="ChEBI" id="CHEBI:57822"/>
        <dbReference type="ChEBI" id="CHEBI:456216"/>
        <dbReference type="EC" id="6.3.2.4"/>
    </reaction>
</comment>
<comment type="cofactor">
    <cofactor evidence="1">
        <name>Mg(2+)</name>
        <dbReference type="ChEBI" id="CHEBI:18420"/>
    </cofactor>
    <cofactor evidence="1">
        <name>Mn(2+)</name>
        <dbReference type="ChEBI" id="CHEBI:29035"/>
    </cofactor>
    <text evidence="1">Binds 2 magnesium or manganese ions per subunit.</text>
</comment>
<comment type="pathway">
    <text evidence="2">Cell wall biogenesis; peptidoglycan biosynthesis.</text>
</comment>
<comment type="subcellular location">
    <subcellularLocation>
        <location evidence="2">Cytoplasm</location>
    </subcellularLocation>
</comment>
<comment type="similarity">
    <text evidence="2">Belongs to the D-alanine--D-alanine ligase family.</text>
</comment>
<name>DDL_PROMT</name>
<protein>
    <recommendedName>
        <fullName evidence="2">D-alanine--D-alanine ligase</fullName>
        <ecNumber evidence="2">6.3.2.4</ecNumber>
    </recommendedName>
    <alternativeName>
        <fullName evidence="2">D-Ala-D-Ala ligase</fullName>
    </alternativeName>
    <alternativeName>
        <fullName evidence="2">D-alanylalanine synthetase</fullName>
    </alternativeName>
</protein>
<evidence type="ECO:0000250" key="1"/>
<evidence type="ECO:0000255" key="2">
    <source>
        <dbReference type="HAMAP-Rule" id="MF_00047"/>
    </source>
</evidence>
<proteinExistence type="inferred from homology"/>
<sequence length="348" mass="39386">MFSNKQVIGVVFGGKSSEHEVSIKSAKTIYNALRYLSNKERYIARPIYIDKYGYWHDYIFSESILFDKKDHLIFEERRINLTNLSNMEDIDVWFPCLHGPNGEDGVIQGLFKSTGKPFVGSGVLGSALGMDKIAMKSVFKSYNLPQVPYISLNKPDIQNNLYMKSIYEQINKIISYPCFIKPANLGSSVGITKAYSKEEFIAGIEFAAKYDERIIVEKSIEGRELECGILGKSIMKSSVVGEVKFQTDWYTYESKYNANLSSTIIPADLNIEISNKIQKLAIEACKAINAYGLARVDFFYQESTQQIYINEVNTLPGFTKTSMYPTLWEASGLKLEKLVANLIEIAKE</sequence>
<gene>
    <name evidence="2" type="primary">ddl</name>
    <name type="ordered locus">PMN2A_0872</name>
</gene>
<dbReference type="EC" id="6.3.2.4" evidence="2"/>
<dbReference type="EMBL" id="CP000095">
    <property type="protein sequence ID" value="AAZ58363.1"/>
    <property type="molecule type" value="Genomic_DNA"/>
</dbReference>
<dbReference type="RefSeq" id="WP_011294960.1">
    <property type="nucleotide sequence ID" value="NC_007335.2"/>
</dbReference>
<dbReference type="SMR" id="Q46JG5"/>
<dbReference type="STRING" id="59920.PMN2A_0872"/>
<dbReference type="KEGG" id="pmn:PMN2A_0872"/>
<dbReference type="HOGENOM" id="CLU_039268_0_0_3"/>
<dbReference type="OrthoDB" id="9813261at2"/>
<dbReference type="PhylomeDB" id="Q46JG5"/>
<dbReference type="UniPathway" id="UPA00219"/>
<dbReference type="Proteomes" id="UP000002535">
    <property type="component" value="Chromosome"/>
</dbReference>
<dbReference type="GO" id="GO:0005829">
    <property type="term" value="C:cytosol"/>
    <property type="evidence" value="ECO:0007669"/>
    <property type="project" value="TreeGrafter"/>
</dbReference>
<dbReference type="GO" id="GO:0005524">
    <property type="term" value="F:ATP binding"/>
    <property type="evidence" value="ECO:0007669"/>
    <property type="project" value="UniProtKB-KW"/>
</dbReference>
<dbReference type="GO" id="GO:0008716">
    <property type="term" value="F:D-alanine-D-alanine ligase activity"/>
    <property type="evidence" value="ECO:0007669"/>
    <property type="project" value="UniProtKB-UniRule"/>
</dbReference>
<dbReference type="GO" id="GO:0046872">
    <property type="term" value="F:metal ion binding"/>
    <property type="evidence" value="ECO:0007669"/>
    <property type="project" value="UniProtKB-KW"/>
</dbReference>
<dbReference type="GO" id="GO:0071555">
    <property type="term" value="P:cell wall organization"/>
    <property type="evidence" value="ECO:0007669"/>
    <property type="project" value="UniProtKB-KW"/>
</dbReference>
<dbReference type="GO" id="GO:0009252">
    <property type="term" value="P:peptidoglycan biosynthetic process"/>
    <property type="evidence" value="ECO:0007669"/>
    <property type="project" value="UniProtKB-UniRule"/>
</dbReference>
<dbReference type="GO" id="GO:0008360">
    <property type="term" value="P:regulation of cell shape"/>
    <property type="evidence" value="ECO:0007669"/>
    <property type="project" value="UniProtKB-KW"/>
</dbReference>
<dbReference type="FunFam" id="3.30.1490.20:FF:000007">
    <property type="entry name" value="D-alanine--D-alanine ligase"/>
    <property type="match status" value="1"/>
</dbReference>
<dbReference type="FunFam" id="3.30.470.20:FF:000008">
    <property type="entry name" value="D-alanine--D-alanine ligase"/>
    <property type="match status" value="1"/>
</dbReference>
<dbReference type="Gene3D" id="3.40.50.20">
    <property type="match status" value="1"/>
</dbReference>
<dbReference type="Gene3D" id="3.30.1490.20">
    <property type="entry name" value="ATP-grasp fold, A domain"/>
    <property type="match status" value="1"/>
</dbReference>
<dbReference type="Gene3D" id="3.30.470.20">
    <property type="entry name" value="ATP-grasp fold, B domain"/>
    <property type="match status" value="1"/>
</dbReference>
<dbReference type="HAMAP" id="MF_00047">
    <property type="entry name" value="Dala_Dala_lig"/>
    <property type="match status" value="1"/>
</dbReference>
<dbReference type="InterPro" id="IPR011761">
    <property type="entry name" value="ATP-grasp"/>
</dbReference>
<dbReference type="InterPro" id="IPR013815">
    <property type="entry name" value="ATP_grasp_subdomain_1"/>
</dbReference>
<dbReference type="InterPro" id="IPR000291">
    <property type="entry name" value="D-Ala_lig_Van_CS"/>
</dbReference>
<dbReference type="InterPro" id="IPR005905">
    <property type="entry name" value="D_ala_D_ala"/>
</dbReference>
<dbReference type="InterPro" id="IPR011095">
    <property type="entry name" value="Dala_Dala_lig_C"/>
</dbReference>
<dbReference type="InterPro" id="IPR011127">
    <property type="entry name" value="Dala_Dala_lig_N"/>
</dbReference>
<dbReference type="InterPro" id="IPR016185">
    <property type="entry name" value="PreATP-grasp_dom_sf"/>
</dbReference>
<dbReference type="NCBIfam" id="TIGR01205">
    <property type="entry name" value="D_ala_D_alaTIGR"/>
    <property type="match status" value="1"/>
</dbReference>
<dbReference type="NCBIfam" id="NF002528">
    <property type="entry name" value="PRK01966.1-4"/>
    <property type="match status" value="1"/>
</dbReference>
<dbReference type="PANTHER" id="PTHR23132">
    <property type="entry name" value="D-ALANINE--D-ALANINE LIGASE"/>
    <property type="match status" value="1"/>
</dbReference>
<dbReference type="PANTHER" id="PTHR23132:SF25">
    <property type="entry name" value="D-ALANINE--D-ALANINE LIGASE A"/>
    <property type="match status" value="1"/>
</dbReference>
<dbReference type="Pfam" id="PF07478">
    <property type="entry name" value="Dala_Dala_lig_C"/>
    <property type="match status" value="1"/>
</dbReference>
<dbReference type="Pfam" id="PF01820">
    <property type="entry name" value="Dala_Dala_lig_N"/>
    <property type="match status" value="1"/>
</dbReference>
<dbReference type="PIRSF" id="PIRSF039102">
    <property type="entry name" value="Ddl/VanB"/>
    <property type="match status" value="1"/>
</dbReference>
<dbReference type="SUPFAM" id="SSF56059">
    <property type="entry name" value="Glutathione synthetase ATP-binding domain-like"/>
    <property type="match status" value="1"/>
</dbReference>
<dbReference type="SUPFAM" id="SSF52440">
    <property type="entry name" value="PreATP-grasp domain"/>
    <property type="match status" value="1"/>
</dbReference>
<dbReference type="PROSITE" id="PS50975">
    <property type="entry name" value="ATP_GRASP"/>
    <property type="match status" value="1"/>
</dbReference>
<dbReference type="PROSITE" id="PS00843">
    <property type="entry name" value="DALA_DALA_LIGASE_1"/>
    <property type="match status" value="1"/>
</dbReference>
<dbReference type="PROSITE" id="PS00844">
    <property type="entry name" value="DALA_DALA_LIGASE_2"/>
    <property type="match status" value="1"/>
</dbReference>
<reference key="1">
    <citation type="journal article" date="2007" name="PLoS Genet.">
        <title>Patterns and implications of gene gain and loss in the evolution of Prochlorococcus.</title>
        <authorList>
            <person name="Kettler G.C."/>
            <person name="Martiny A.C."/>
            <person name="Huang K."/>
            <person name="Zucker J."/>
            <person name="Coleman M.L."/>
            <person name="Rodrigue S."/>
            <person name="Chen F."/>
            <person name="Lapidus A."/>
            <person name="Ferriera S."/>
            <person name="Johnson J."/>
            <person name="Steglich C."/>
            <person name="Church G.M."/>
            <person name="Richardson P."/>
            <person name="Chisholm S.W."/>
        </authorList>
    </citation>
    <scope>NUCLEOTIDE SEQUENCE [LARGE SCALE GENOMIC DNA]</scope>
    <source>
        <strain>NATL2A</strain>
    </source>
</reference>
<feature type="chain" id="PRO_1000030484" description="D-alanine--D-alanine ligase">
    <location>
        <begin position="1"/>
        <end position="348"/>
    </location>
</feature>
<feature type="domain" description="ATP-grasp" evidence="2">
    <location>
        <begin position="136"/>
        <end position="344"/>
    </location>
</feature>
<feature type="binding site" evidence="2">
    <location>
        <begin position="171"/>
        <end position="226"/>
    </location>
    <ligand>
        <name>ATP</name>
        <dbReference type="ChEBI" id="CHEBI:30616"/>
    </ligand>
</feature>
<feature type="binding site" evidence="2">
    <location>
        <position position="297"/>
    </location>
    <ligand>
        <name>Mg(2+)</name>
        <dbReference type="ChEBI" id="CHEBI:18420"/>
        <label>1</label>
    </ligand>
</feature>
<feature type="binding site" evidence="2">
    <location>
        <position position="311"/>
    </location>
    <ligand>
        <name>Mg(2+)</name>
        <dbReference type="ChEBI" id="CHEBI:18420"/>
        <label>1</label>
    </ligand>
</feature>
<feature type="binding site" evidence="2">
    <location>
        <position position="311"/>
    </location>
    <ligand>
        <name>Mg(2+)</name>
        <dbReference type="ChEBI" id="CHEBI:18420"/>
        <label>2</label>
    </ligand>
</feature>
<feature type="binding site" evidence="2">
    <location>
        <position position="313"/>
    </location>
    <ligand>
        <name>Mg(2+)</name>
        <dbReference type="ChEBI" id="CHEBI:18420"/>
        <label>2</label>
    </ligand>
</feature>